<keyword id="KW-0002">3D-structure</keyword>
<keyword id="KW-1003">Cell membrane</keyword>
<keyword id="KW-0472">Membrane</keyword>
<keyword id="KW-0520">NAD</keyword>
<keyword id="KW-0874">Quinone</keyword>
<keyword id="KW-1185">Reference proteome</keyword>
<keyword id="KW-1278">Translocase</keyword>
<keyword id="KW-0812">Transmembrane</keyword>
<keyword id="KW-1133">Transmembrane helix</keyword>
<organism>
    <name type="scientific">Mycolicibacterium smegmatis (strain ATCC 700084 / mc(2)155)</name>
    <name type="common">Mycobacterium smegmatis</name>
    <dbReference type="NCBI Taxonomy" id="246196"/>
    <lineage>
        <taxon>Bacteria</taxon>
        <taxon>Bacillati</taxon>
        <taxon>Actinomycetota</taxon>
        <taxon>Actinomycetes</taxon>
        <taxon>Mycobacteriales</taxon>
        <taxon>Mycobacteriaceae</taxon>
        <taxon>Mycolicibacterium</taxon>
    </lineage>
</organism>
<sequence length="408" mass="44447">MTHPDPTLFGHDPWWLMLAKAVAIFVFLLLTVLSAILIERKLLGRMQMRFGPNRVGPAGLLQSLADGIKLALKEGLVPAGVDKPIYLLAPVISVIPAFVAFSVIPLGGAVSVFGHRTPLQLTDLPVAVLFILAATSIGVYGIVLAGWASGSTYPLLGGLRSSAQVVSYEIAMGLSFVAVFLYAGTMSTSGIVAAQDRTWFVFLLLPSFLVYVVSMVGETNRAPFDLPEAEGELVGGFHTEYSSLKFAMFMLAEYVNMTTVSALATTMFLGGWHAPFPFNLIDGANSGWWPLLWFTAKVWTFMFLYFWLRATLPRLRYDQFMALGWKVLIPVSLLWIMVVAITRSLRQHGEGTWAAWLLTAAVVVVVALIWGLATSLRRRTVQPPPPQSTGAYPVPPLPSVGTKETADA</sequence>
<feature type="chain" id="PRO_0000298828" description="NADH-quinone oxidoreductase subunit H">
    <location>
        <begin position="1"/>
        <end position="408"/>
    </location>
</feature>
<feature type="transmembrane region" description="Helical" evidence="1">
    <location>
        <begin position="18"/>
        <end position="38"/>
    </location>
</feature>
<feature type="transmembrane region" description="Helical" evidence="1">
    <location>
        <begin position="84"/>
        <end position="104"/>
    </location>
</feature>
<feature type="transmembrane region" description="Helical" evidence="1">
    <location>
        <begin position="124"/>
        <end position="144"/>
    </location>
</feature>
<feature type="transmembrane region" description="Helical" evidence="1">
    <location>
        <begin position="165"/>
        <end position="185"/>
    </location>
</feature>
<feature type="transmembrane region" description="Helical" evidence="1">
    <location>
        <begin position="198"/>
        <end position="218"/>
    </location>
</feature>
<feature type="transmembrane region" description="Helical" evidence="1">
    <location>
        <begin position="261"/>
        <end position="281"/>
    </location>
</feature>
<feature type="transmembrane region" description="Helical" evidence="1">
    <location>
        <begin position="288"/>
        <end position="308"/>
    </location>
</feature>
<feature type="transmembrane region" description="Helical" evidence="1">
    <location>
        <begin position="321"/>
        <end position="341"/>
    </location>
</feature>
<feature type="transmembrane region" description="Helical" evidence="1">
    <location>
        <begin position="353"/>
        <end position="373"/>
    </location>
</feature>
<feature type="region of interest" description="Disordered" evidence="2">
    <location>
        <begin position="381"/>
        <end position="408"/>
    </location>
</feature>
<feature type="compositionally biased region" description="Pro residues" evidence="2">
    <location>
        <begin position="382"/>
        <end position="398"/>
    </location>
</feature>
<feature type="turn" evidence="3">
    <location>
        <begin position="6"/>
        <end position="8"/>
    </location>
</feature>
<feature type="helix" evidence="3">
    <location>
        <begin position="14"/>
        <end position="46"/>
    </location>
</feature>
<feature type="strand" evidence="3">
    <location>
        <begin position="54"/>
        <end position="56"/>
    </location>
</feature>
<feature type="helix" evidence="3">
    <location>
        <begin position="57"/>
        <end position="59"/>
    </location>
</feature>
<feature type="helix" evidence="3">
    <location>
        <begin position="62"/>
        <end position="71"/>
    </location>
</feature>
<feature type="helix" evidence="3">
    <location>
        <begin position="83"/>
        <end position="100"/>
    </location>
</feature>
<feature type="helix" evidence="3">
    <location>
        <begin position="101"/>
        <end position="103"/>
    </location>
</feature>
<feature type="strand" evidence="3">
    <location>
        <begin position="107"/>
        <end position="112"/>
    </location>
</feature>
<feature type="strand" evidence="3">
    <location>
        <begin position="115"/>
        <end position="121"/>
    </location>
</feature>
<feature type="helix" evidence="3">
    <location>
        <begin position="127"/>
        <end position="148"/>
    </location>
</feature>
<feature type="helix" evidence="3">
    <location>
        <begin position="152"/>
        <end position="183"/>
    </location>
</feature>
<feature type="helix" evidence="3">
    <location>
        <begin position="188"/>
        <end position="194"/>
    </location>
</feature>
<feature type="strand" evidence="3">
    <location>
        <begin position="196"/>
        <end position="198"/>
    </location>
</feature>
<feature type="helix" evidence="3">
    <location>
        <begin position="200"/>
        <end position="203"/>
    </location>
</feature>
<feature type="helix" evidence="3">
    <location>
        <begin position="205"/>
        <end position="218"/>
    </location>
</feature>
<feature type="turn" evidence="3">
    <location>
        <begin position="222"/>
        <end position="224"/>
    </location>
</feature>
<feature type="turn" evidence="3">
    <location>
        <begin position="226"/>
        <end position="228"/>
    </location>
</feature>
<feature type="helix" evidence="3">
    <location>
        <begin position="230"/>
        <end position="233"/>
    </location>
</feature>
<feature type="helix" evidence="3">
    <location>
        <begin position="236"/>
        <end position="238"/>
    </location>
</feature>
<feature type="helix" evidence="3">
    <location>
        <begin position="243"/>
        <end position="268"/>
    </location>
</feature>
<feature type="helix" evidence="3">
    <location>
        <begin position="276"/>
        <end position="279"/>
    </location>
</feature>
<feature type="turn" evidence="3">
    <location>
        <begin position="282"/>
        <end position="285"/>
    </location>
</feature>
<feature type="helix" evidence="3">
    <location>
        <begin position="289"/>
        <end position="311"/>
    </location>
</feature>
<feature type="helix" evidence="3">
    <location>
        <begin position="317"/>
        <end position="326"/>
    </location>
</feature>
<feature type="helix" evidence="3">
    <location>
        <begin position="328"/>
        <end position="347"/>
    </location>
</feature>
<feature type="helix" evidence="3">
    <location>
        <begin position="352"/>
        <end position="374"/>
    </location>
</feature>
<feature type="strand" evidence="4">
    <location>
        <begin position="376"/>
        <end position="378"/>
    </location>
</feature>
<proteinExistence type="evidence at protein level"/>
<gene>
    <name evidence="1" type="primary">nuoH</name>
    <name type="ordered locus">MSMEG_2056</name>
    <name type="ordered locus">MSMEI_2011</name>
</gene>
<protein>
    <recommendedName>
        <fullName evidence="1">NADH-quinone oxidoreductase subunit H</fullName>
        <ecNumber evidence="1">7.1.1.-</ecNumber>
    </recommendedName>
    <alternativeName>
        <fullName evidence="1">NADH dehydrogenase I subunit H</fullName>
    </alternativeName>
    <alternativeName>
        <fullName evidence="1">NDH-1 subunit H</fullName>
    </alternativeName>
</protein>
<reference key="1">
    <citation type="submission" date="2006-10" db="EMBL/GenBank/DDBJ databases">
        <authorList>
            <person name="Fleischmann R.D."/>
            <person name="Dodson R.J."/>
            <person name="Haft D.H."/>
            <person name="Merkel J.S."/>
            <person name="Nelson W.C."/>
            <person name="Fraser C.M."/>
        </authorList>
    </citation>
    <scope>NUCLEOTIDE SEQUENCE [LARGE SCALE GENOMIC DNA]</scope>
    <source>
        <strain>ATCC 700084 / mc(2)155</strain>
    </source>
</reference>
<reference key="2">
    <citation type="journal article" date="2007" name="Genome Biol.">
        <title>Interrupted coding sequences in Mycobacterium smegmatis: authentic mutations or sequencing errors?</title>
        <authorList>
            <person name="Deshayes C."/>
            <person name="Perrodou E."/>
            <person name="Gallien S."/>
            <person name="Euphrasie D."/>
            <person name="Schaeffer C."/>
            <person name="Van-Dorsselaer A."/>
            <person name="Poch O."/>
            <person name="Lecompte O."/>
            <person name="Reyrat J.-M."/>
        </authorList>
    </citation>
    <scope>NUCLEOTIDE SEQUENCE [LARGE SCALE GENOMIC DNA]</scope>
    <source>
        <strain>ATCC 700084 / mc(2)155</strain>
    </source>
</reference>
<reference key="3">
    <citation type="journal article" date="2009" name="Genome Res.">
        <title>Ortho-proteogenomics: multiple proteomes investigation through orthology and a new MS-based protocol.</title>
        <authorList>
            <person name="Gallien S."/>
            <person name="Perrodou E."/>
            <person name="Carapito C."/>
            <person name="Deshayes C."/>
            <person name="Reyrat J.-M."/>
            <person name="Van Dorsselaer A."/>
            <person name="Poch O."/>
            <person name="Schaeffer C."/>
            <person name="Lecompte O."/>
        </authorList>
    </citation>
    <scope>NUCLEOTIDE SEQUENCE [LARGE SCALE GENOMIC DNA]</scope>
    <source>
        <strain>ATCC 700084 / mc(2)155</strain>
    </source>
</reference>
<name>NUOH_MYCS2</name>
<comment type="function">
    <text evidence="1">NDH-1 shuttles electrons from NADH, via FMN and iron-sulfur (Fe-S) centers, to quinones in the respiratory chain. The immediate electron acceptor for the enzyme in this species is believed to be menaquinone. Couples the redox reaction to proton translocation (for every two electrons transferred, four hydrogen ions are translocated across the cytoplasmic membrane), and thus conserves the redox energy in a proton gradient. This subunit may bind ubiquinone (By similarity).</text>
</comment>
<comment type="catalytic activity">
    <reaction evidence="1">
        <text>a quinone + NADH + 5 H(+)(in) = a quinol + NAD(+) + 4 H(+)(out)</text>
        <dbReference type="Rhea" id="RHEA:57888"/>
        <dbReference type="ChEBI" id="CHEBI:15378"/>
        <dbReference type="ChEBI" id="CHEBI:24646"/>
        <dbReference type="ChEBI" id="CHEBI:57540"/>
        <dbReference type="ChEBI" id="CHEBI:57945"/>
        <dbReference type="ChEBI" id="CHEBI:132124"/>
    </reaction>
</comment>
<comment type="subunit">
    <text evidence="1">NDH-1 is composed of 14 different subunits. Subunits NuoA, H, J, K, L, M, N constitute the membrane sector of the complex.</text>
</comment>
<comment type="subcellular location">
    <subcellularLocation>
        <location evidence="1">Cell membrane</location>
        <topology evidence="1">Multi-pass membrane protein</topology>
    </subcellularLocation>
</comment>
<comment type="similarity">
    <text evidence="1">Belongs to the complex I subunit 1 family.</text>
</comment>
<evidence type="ECO:0000255" key="1">
    <source>
        <dbReference type="HAMAP-Rule" id="MF_01350"/>
    </source>
</evidence>
<evidence type="ECO:0000256" key="2">
    <source>
        <dbReference type="SAM" id="MobiDB-lite"/>
    </source>
</evidence>
<evidence type="ECO:0007829" key="3">
    <source>
        <dbReference type="PDB" id="8E9G"/>
    </source>
</evidence>
<evidence type="ECO:0007829" key="4">
    <source>
        <dbReference type="PDB" id="8E9I"/>
    </source>
</evidence>
<accession>A0QU29</accession>
<accession>I7FZB1</accession>
<dbReference type="EC" id="7.1.1.-" evidence="1"/>
<dbReference type="EMBL" id="CP000480">
    <property type="protein sequence ID" value="ABK71778.1"/>
    <property type="molecule type" value="Genomic_DNA"/>
</dbReference>
<dbReference type="EMBL" id="CP001663">
    <property type="protein sequence ID" value="AFP38482.1"/>
    <property type="molecule type" value="Genomic_DNA"/>
</dbReference>
<dbReference type="RefSeq" id="WP_011728120.1">
    <property type="nucleotide sequence ID" value="NZ_SIJM01000021.1"/>
</dbReference>
<dbReference type="RefSeq" id="YP_886417.1">
    <property type="nucleotide sequence ID" value="NC_008596.1"/>
</dbReference>
<dbReference type="PDB" id="8E9G">
    <property type="method" value="EM"/>
    <property type="resolution" value="2.60 A"/>
    <property type="chains" value="H=1-408"/>
</dbReference>
<dbReference type="PDB" id="8E9H">
    <property type="method" value="EM"/>
    <property type="resolution" value="2.70 A"/>
    <property type="chains" value="H=1-408"/>
</dbReference>
<dbReference type="PDB" id="8E9I">
    <property type="method" value="EM"/>
    <property type="resolution" value="2.80 A"/>
    <property type="chains" value="H=1-408"/>
</dbReference>
<dbReference type="PDBsum" id="8E9G"/>
<dbReference type="PDBsum" id="8E9H"/>
<dbReference type="PDBsum" id="8E9I"/>
<dbReference type="EMDB" id="EMD-27963"/>
<dbReference type="EMDB" id="EMD-27964"/>
<dbReference type="EMDB" id="EMD-27965"/>
<dbReference type="SMR" id="A0QU29"/>
<dbReference type="STRING" id="246196.MSMEG_2056"/>
<dbReference type="PaxDb" id="246196-MSMEI_2011"/>
<dbReference type="GeneID" id="93456860"/>
<dbReference type="KEGG" id="msb:LJ00_10250"/>
<dbReference type="KEGG" id="msg:MSMEI_2011"/>
<dbReference type="KEGG" id="msm:MSMEG_2056"/>
<dbReference type="PATRIC" id="fig|246196.19.peg.2032"/>
<dbReference type="eggNOG" id="COG1005">
    <property type="taxonomic scope" value="Bacteria"/>
</dbReference>
<dbReference type="OrthoDB" id="9803734at2"/>
<dbReference type="Proteomes" id="UP000000757">
    <property type="component" value="Chromosome"/>
</dbReference>
<dbReference type="Proteomes" id="UP000006158">
    <property type="component" value="Chromosome"/>
</dbReference>
<dbReference type="GO" id="GO:0005886">
    <property type="term" value="C:plasma membrane"/>
    <property type="evidence" value="ECO:0007669"/>
    <property type="project" value="UniProtKB-SubCell"/>
</dbReference>
<dbReference type="GO" id="GO:0003954">
    <property type="term" value="F:NADH dehydrogenase activity"/>
    <property type="evidence" value="ECO:0007669"/>
    <property type="project" value="TreeGrafter"/>
</dbReference>
<dbReference type="GO" id="GO:0016655">
    <property type="term" value="F:oxidoreductase activity, acting on NAD(P)H, quinone or similar compound as acceptor"/>
    <property type="evidence" value="ECO:0007669"/>
    <property type="project" value="UniProtKB-UniRule"/>
</dbReference>
<dbReference type="GO" id="GO:0048038">
    <property type="term" value="F:quinone binding"/>
    <property type="evidence" value="ECO:0007669"/>
    <property type="project" value="UniProtKB-KW"/>
</dbReference>
<dbReference type="GO" id="GO:0009060">
    <property type="term" value="P:aerobic respiration"/>
    <property type="evidence" value="ECO:0007669"/>
    <property type="project" value="TreeGrafter"/>
</dbReference>
<dbReference type="HAMAP" id="MF_01350">
    <property type="entry name" value="NDH1_NuoH"/>
    <property type="match status" value="1"/>
</dbReference>
<dbReference type="InterPro" id="IPR001694">
    <property type="entry name" value="NADH_UbQ_OxRdtase_su1/FPO"/>
</dbReference>
<dbReference type="InterPro" id="IPR018086">
    <property type="entry name" value="NADH_UbQ_OxRdtase_su1_CS"/>
</dbReference>
<dbReference type="NCBIfam" id="NF004741">
    <property type="entry name" value="PRK06076.1-2"/>
    <property type="match status" value="1"/>
</dbReference>
<dbReference type="NCBIfam" id="NF004743">
    <property type="entry name" value="PRK06076.1-4"/>
    <property type="match status" value="1"/>
</dbReference>
<dbReference type="PANTHER" id="PTHR11432">
    <property type="entry name" value="NADH DEHYDROGENASE SUBUNIT 1"/>
    <property type="match status" value="1"/>
</dbReference>
<dbReference type="PANTHER" id="PTHR11432:SF3">
    <property type="entry name" value="NADH-UBIQUINONE OXIDOREDUCTASE CHAIN 1"/>
    <property type="match status" value="1"/>
</dbReference>
<dbReference type="Pfam" id="PF00146">
    <property type="entry name" value="NADHdh"/>
    <property type="match status" value="1"/>
</dbReference>
<dbReference type="PROSITE" id="PS00667">
    <property type="entry name" value="COMPLEX1_ND1_1"/>
    <property type="match status" value="1"/>
</dbReference>
<dbReference type="PROSITE" id="PS00668">
    <property type="entry name" value="COMPLEX1_ND1_2"/>
    <property type="match status" value="1"/>
</dbReference>